<dbReference type="EC" id="2.7.7.23" evidence="1"/>
<dbReference type="EC" id="2.3.1.157" evidence="1"/>
<dbReference type="EMBL" id="AE009442">
    <property type="protein sequence ID" value="AAO28304.1"/>
    <property type="molecule type" value="Genomic_DNA"/>
</dbReference>
<dbReference type="SMR" id="Q87E93"/>
<dbReference type="KEGG" id="xft:PD_0425"/>
<dbReference type="HOGENOM" id="CLU_029499_15_2_6"/>
<dbReference type="UniPathway" id="UPA00113">
    <property type="reaction ID" value="UER00532"/>
</dbReference>
<dbReference type="UniPathway" id="UPA00113">
    <property type="reaction ID" value="UER00533"/>
</dbReference>
<dbReference type="UniPathway" id="UPA00973"/>
<dbReference type="Proteomes" id="UP000002516">
    <property type="component" value="Chromosome"/>
</dbReference>
<dbReference type="GO" id="GO:0005737">
    <property type="term" value="C:cytoplasm"/>
    <property type="evidence" value="ECO:0007669"/>
    <property type="project" value="UniProtKB-SubCell"/>
</dbReference>
<dbReference type="GO" id="GO:0016020">
    <property type="term" value="C:membrane"/>
    <property type="evidence" value="ECO:0007669"/>
    <property type="project" value="GOC"/>
</dbReference>
<dbReference type="GO" id="GO:0019134">
    <property type="term" value="F:glucosamine-1-phosphate N-acetyltransferase activity"/>
    <property type="evidence" value="ECO:0007669"/>
    <property type="project" value="UniProtKB-UniRule"/>
</dbReference>
<dbReference type="GO" id="GO:0000287">
    <property type="term" value="F:magnesium ion binding"/>
    <property type="evidence" value="ECO:0007669"/>
    <property type="project" value="UniProtKB-UniRule"/>
</dbReference>
<dbReference type="GO" id="GO:0003977">
    <property type="term" value="F:UDP-N-acetylglucosamine diphosphorylase activity"/>
    <property type="evidence" value="ECO:0007669"/>
    <property type="project" value="UniProtKB-UniRule"/>
</dbReference>
<dbReference type="GO" id="GO:0000902">
    <property type="term" value="P:cell morphogenesis"/>
    <property type="evidence" value="ECO:0007669"/>
    <property type="project" value="UniProtKB-UniRule"/>
</dbReference>
<dbReference type="GO" id="GO:0071555">
    <property type="term" value="P:cell wall organization"/>
    <property type="evidence" value="ECO:0007669"/>
    <property type="project" value="UniProtKB-KW"/>
</dbReference>
<dbReference type="GO" id="GO:0009245">
    <property type="term" value="P:lipid A biosynthetic process"/>
    <property type="evidence" value="ECO:0007669"/>
    <property type="project" value="UniProtKB-UniRule"/>
</dbReference>
<dbReference type="GO" id="GO:0009252">
    <property type="term" value="P:peptidoglycan biosynthetic process"/>
    <property type="evidence" value="ECO:0007669"/>
    <property type="project" value="UniProtKB-UniRule"/>
</dbReference>
<dbReference type="GO" id="GO:0008360">
    <property type="term" value="P:regulation of cell shape"/>
    <property type="evidence" value="ECO:0007669"/>
    <property type="project" value="UniProtKB-KW"/>
</dbReference>
<dbReference type="GO" id="GO:0006048">
    <property type="term" value="P:UDP-N-acetylglucosamine biosynthetic process"/>
    <property type="evidence" value="ECO:0007669"/>
    <property type="project" value="UniProtKB-UniPathway"/>
</dbReference>
<dbReference type="CDD" id="cd02540">
    <property type="entry name" value="GT2_GlmU_N_bac"/>
    <property type="match status" value="1"/>
</dbReference>
<dbReference type="CDD" id="cd03353">
    <property type="entry name" value="LbH_GlmU_C"/>
    <property type="match status" value="1"/>
</dbReference>
<dbReference type="Gene3D" id="2.160.10.10">
    <property type="entry name" value="Hexapeptide repeat proteins"/>
    <property type="match status" value="1"/>
</dbReference>
<dbReference type="Gene3D" id="3.90.550.10">
    <property type="entry name" value="Spore Coat Polysaccharide Biosynthesis Protein SpsA, Chain A"/>
    <property type="match status" value="1"/>
</dbReference>
<dbReference type="HAMAP" id="MF_01631">
    <property type="entry name" value="GlmU"/>
    <property type="match status" value="1"/>
</dbReference>
<dbReference type="InterPro" id="IPR005882">
    <property type="entry name" value="Bifunctional_GlmU"/>
</dbReference>
<dbReference type="InterPro" id="IPR050065">
    <property type="entry name" value="GlmU-like"/>
</dbReference>
<dbReference type="InterPro" id="IPR038009">
    <property type="entry name" value="GlmU_C_LbH"/>
</dbReference>
<dbReference type="InterPro" id="IPR001451">
    <property type="entry name" value="Hexapep"/>
</dbReference>
<dbReference type="InterPro" id="IPR025877">
    <property type="entry name" value="MobA-like_NTP_Trfase"/>
</dbReference>
<dbReference type="InterPro" id="IPR029044">
    <property type="entry name" value="Nucleotide-diphossugar_trans"/>
</dbReference>
<dbReference type="InterPro" id="IPR011004">
    <property type="entry name" value="Trimer_LpxA-like_sf"/>
</dbReference>
<dbReference type="NCBIfam" id="TIGR01173">
    <property type="entry name" value="glmU"/>
    <property type="match status" value="1"/>
</dbReference>
<dbReference type="PANTHER" id="PTHR43584:SF3">
    <property type="entry name" value="BIFUNCTIONAL PROTEIN GLMU"/>
    <property type="match status" value="1"/>
</dbReference>
<dbReference type="PANTHER" id="PTHR43584">
    <property type="entry name" value="NUCLEOTIDYL TRANSFERASE"/>
    <property type="match status" value="1"/>
</dbReference>
<dbReference type="Pfam" id="PF00132">
    <property type="entry name" value="Hexapep"/>
    <property type="match status" value="2"/>
</dbReference>
<dbReference type="Pfam" id="PF12804">
    <property type="entry name" value="NTP_transf_3"/>
    <property type="match status" value="1"/>
</dbReference>
<dbReference type="SUPFAM" id="SSF53448">
    <property type="entry name" value="Nucleotide-diphospho-sugar transferases"/>
    <property type="match status" value="1"/>
</dbReference>
<dbReference type="SUPFAM" id="SSF51161">
    <property type="entry name" value="Trimeric LpxA-like enzymes"/>
    <property type="match status" value="1"/>
</dbReference>
<sequence length="457" mass="48749">MPLSLPLHIVILAAGEGKRMKSALPKVLHPIAGKPMLAHVITTARALTPDAIHVVYGHAGNQVRAAFADQTDLHWVEQTQQLGTGHAVKQTMSAIPNAANVLVLYGDVPLIRAETLQRLPRASTPIAVLVTELANPAGYGHIVRNSEGKVAAIIEDKDADEEQRRIHTVNTGILCAESTALRRWLSKLSNTNMQGEYYLTDIFASATADLTPANMIMVTDAQEVEGVNDLWQLTQLERAWQIRAARALCLQGARVADPARLDQRGTIRIGQNVHIDIDVVLEGEIELGDNVVIGPFVRLKNVKLGPGTKVHAHCDLEGVTTTGSALIGPFARLRPETMLADGVHIGNFVETKNTSIGADSKANHLTYLGDAQIGTKVNIGAGTITCNYDGVNKSITLIGDGAFIGSHSALIAPVSVGAGATLGAGTVLTHDAPAHQLTVARARQTTLDGWQRPKKKT</sequence>
<gene>
    <name evidence="1" type="primary">glmU</name>
    <name type="ordered locus">PD_0425</name>
</gene>
<proteinExistence type="inferred from homology"/>
<reference key="1">
    <citation type="journal article" date="2003" name="J. Bacteriol.">
        <title>Comparative analyses of the complete genome sequences of Pierce's disease and citrus variegated chlorosis strains of Xylella fastidiosa.</title>
        <authorList>
            <person name="Van Sluys M.A."/>
            <person name="de Oliveira M.C."/>
            <person name="Monteiro-Vitorello C.B."/>
            <person name="Miyaki C.Y."/>
            <person name="Furlan L.R."/>
            <person name="Camargo L.E.A."/>
            <person name="da Silva A.C.R."/>
            <person name="Moon D.H."/>
            <person name="Takita M.A."/>
            <person name="Lemos E.G.M."/>
            <person name="Machado M.A."/>
            <person name="Ferro M.I.T."/>
            <person name="da Silva F.R."/>
            <person name="Goldman M.H.S."/>
            <person name="Goldman G.H."/>
            <person name="Lemos M.V.F."/>
            <person name="El-Dorry H."/>
            <person name="Tsai S.M."/>
            <person name="Carrer H."/>
            <person name="Carraro D.M."/>
            <person name="de Oliveira R.C."/>
            <person name="Nunes L.R."/>
            <person name="Siqueira W.J."/>
            <person name="Coutinho L.L."/>
            <person name="Kimura E.T."/>
            <person name="Ferro E.S."/>
            <person name="Harakava R."/>
            <person name="Kuramae E.E."/>
            <person name="Marino C.L."/>
            <person name="Giglioti E."/>
            <person name="Abreu I.L."/>
            <person name="Alves L.M.C."/>
            <person name="do Amaral A.M."/>
            <person name="Baia G.S."/>
            <person name="Blanco S.R."/>
            <person name="Brito M.S."/>
            <person name="Cannavan F.S."/>
            <person name="Celestino A.V."/>
            <person name="da Cunha A.F."/>
            <person name="Fenille R.C."/>
            <person name="Ferro J.A."/>
            <person name="Formighieri E.F."/>
            <person name="Kishi L.T."/>
            <person name="Leoni S.G."/>
            <person name="Oliveira A.R."/>
            <person name="Rosa V.E. Jr."/>
            <person name="Sassaki F.T."/>
            <person name="Sena J.A.D."/>
            <person name="de Souza A.A."/>
            <person name="Truffi D."/>
            <person name="Tsukumo F."/>
            <person name="Yanai G.M."/>
            <person name="Zaros L.G."/>
            <person name="Civerolo E.L."/>
            <person name="Simpson A.J.G."/>
            <person name="Almeida N.F. Jr."/>
            <person name="Setubal J.C."/>
            <person name="Kitajima J.P."/>
        </authorList>
    </citation>
    <scope>NUCLEOTIDE SEQUENCE [LARGE SCALE GENOMIC DNA]</scope>
    <source>
        <strain>Temecula1 / ATCC 700964</strain>
    </source>
</reference>
<protein>
    <recommendedName>
        <fullName evidence="1">Bifunctional protein GlmU</fullName>
    </recommendedName>
    <domain>
        <recommendedName>
            <fullName evidence="1">UDP-N-acetylglucosamine pyrophosphorylase</fullName>
            <ecNumber evidence="1">2.7.7.23</ecNumber>
        </recommendedName>
        <alternativeName>
            <fullName evidence="1">N-acetylglucosamine-1-phosphate uridyltransferase</fullName>
        </alternativeName>
    </domain>
    <domain>
        <recommendedName>
            <fullName evidence="1">Glucosamine-1-phosphate N-acetyltransferase</fullName>
            <ecNumber evidence="1">2.3.1.157</ecNumber>
        </recommendedName>
    </domain>
</protein>
<feature type="chain" id="PRO_0000233887" description="Bifunctional protein GlmU">
    <location>
        <begin position="1"/>
        <end position="457"/>
    </location>
</feature>
<feature type="region of interest" description="Pyrophosphorylase" evidence="1">
    <location>
        <begin position="1"/>
        <end position="230"/>
    </location>
</feature>
<feature type="region of interest" description="Linker" evidence="1">
    <location>
        <begin position="231"/>
        <end position="251"/>
    </location>
</feature>
<feature type="region of interest" description="N-acetyltransferase" evidence="1">
    <location>
        <begin position="252"/>
        <end position="457"/>
    </location>
</feature>
<feature type="active site" description="Proton acceptor" evidence="1">
    <location>
        <position position="364"/>
    </location>
</feature>
<feature type="binding site" evidence="1">
    <location>
        <begin position="12"/>
        <end position="15"/>
    </location>
    <ligand>
        <name>UDP-N-acetyl-alpha-D-glucosamine</name>
        <dbReference type="ChEBI" id="CHEBI:57705"/>
    </ligand>
</feature>
<feature type="binding site" evidence="1">
    <location>
        <position position="26"/>
    </location>
    <ligand>
        <name>UDP-N-acetyl-alpha-D-glucosamine</name>
        <dbReference type="ChEBI" id="CHEBI:57705"/>
    </ligand>
</feature>
<feature type="binding site" evidence="1">
    <location>
        <position position="78"/>
    </location>
    <ligand>
        <name>UDP-N-acetyl-alpha-D-glucosamine</name>
        <dbReference type="ChEBI" id="CHEBI:57705"/>
    </ligand>
</feature>
<feature type="binding site" evidence="1">
    <location>
        <begin position="83"/>
        <end position="84"/>
    </location>
    <ligand>
        <name>UDP-N-acetyl-alpha-D-glucosamine</name>
        <dbReference type="ChEBI" id="CHEBI:57705"/>
    </ligand>
</feature>
<feature type="binding site" evidence="1">
    <location>
        <begin position="105"/>
        <end position="107"/>
    </location>
    <ligand>
        <name>UDP-N-acetyl-alpha-D-glucosamine</name>
        <dbReference type="ChEBI" id="CHEBI:57705"/>
    </ligand>
</feature>
<feature type="binding site" evidence="1">
    <location>
        <position position="107"/>
    </location>
    <ligand>
        <name>Mg(2+)</name>
        <dbReference type="ChEBI" id="CHEBI:18420"/>
    </ligand>
</feature>
<feature type="binding site" evidence="1">
    <location>
        <position position="140"/>
    </location>
    <ligand>
        <name>UDP-N-acetyl-alpha-D-glucosamine</name>
        <dbReference type="ChEBI" id="CHEBI:57705"/>
    </ligand>
</feature>
<feature type="binding site" evidence="1">
    <location>
        <position position="155"/>
    </location>
    <ligand>
        <name>UDP-N-acetyl-alpha-D-glucosamine</name>
        <dbReference type="ChEBI" id="CHEBI:57705"/>
    </ligand>
</feature>
<feature type="binding site" evidence="1">
    <location>
        <position position="170"/>
    </location>
    <ligand>
        <name>UDP-N-acetyl-alpha-D-glucosamine</name>
        <dbReference type="ChEBI" id="CHEBI:57705"/>
    </ligand>
</feature>
<feature type="binding site" evidence="1">
    <location>
        <position position="228"/>
    </location>
    <ligand>
        <name>Mg(2+)</name>
        <dbReference type="ChEBI" id="CHEBI:18420"/>
    </ligand>
</feature>
<feature type="binding site" evidence="1">
    <location>
        <position position="228"/>
    </location>
    <ligand>
        <name>UDP-N-acetyl-alpha-D-glucosamine</name>
        <dbReference type="ChEBI" id="CHEBI:57705"/>
    </ligand>
</feature>
<feature type="binding site" evidence="1">
    <location>
        <position position="334"/>
    </location>
    <ligand>
        <name>UDP-N-acetyl-alpha-D-glucosamine</name>
        <dbReference type="ChEBI" id="CHEBI:57705"/>
    </ligand>
</feature>
<feature type="binding site" evidence="1">
    <location>
        <position position="352"/>
    </location>
    <ligand>
        <name>UDP-N-acetyl-alpha-D-glucosamine</name>
        <dbReference type="ChEBI" id="CHEBI:57705"/>
    </ligand>
</feature>
<feature type="binding site" evidence="1">
    <location>
        <position position="367"/>
    </location>
    <ligand>
        <name>UDP-N-acetyl-alpha-D-glucosamine</name>
        <dbReference type="ChEBI" id="CHEBI:57705"/>
    </ligand>
</feature>
<feature type="binding site" evidence="1">
    <location>
        <position position="378"/>
    </location>
    <ligand>
        <name>UDP-N-acetyl-alpha-D-glucosamine</name>
        <dbReference type="ChEBI" id="CHEBI:57705"/>
    </ligand>
</feature>
<feature type="binding site" evidence="1">
    <location>
        <position position="381"/>
    </location>
    <ligand>
        <name>acetyl-CoA</name>
        <dbReference type="ChEBI" id="CHEBI:57288"/>
    </ligand>
</feature>
<feature type="binding site" evidence="1">
    <location>
        <begin position="387"/>
        <end position="388"/>
    </location>
    <ligand>
        <name>acetyl-CoA</name>
        <dbReference type="ChEBI" id="CHEBI:57288"/>
    </ligand>
</feature>
<feature type="binding site" evidence="1">
    <location>
        <position position="406"/>
    </location>
    <ligand>
        <name>acetyl-CoA</name>
        <dbReference type="ChEBI" id="CHEBI:57288"/>
    </ligand>
</feature>
<feature type="binding site" evidence="1">
    <location>
        <position position="424"/>
    </location>
    <ligand>
        <name>acetyl-CoA</name>
        <dbReference type="ChEBI" id="CHEBI:57288"/>
    </ligand>
</feature>
<feature type="binding site" evidence="1">
    <location>
        <position position="441"/>
    </location>
    <ligand>
        <name>acetyl-CoA</name>
        <dbReference type="ChEBI" id="CHEBI:57288"/>
    </ligand>
</feature>
<evidence type="ECO:0000255" key="1">
    <source>
        <dbReference type="HAMAP-Rule" id="MF_01631"/>
    </source>
</evidence>
<name>GLMU_XYLFT</name>
<organism>
    <name type="scientific">Xylella fastidiosa (strain Temecula1 / ATCC 700964)</name>
    <dbReference type="NCBI Taxonomy" id="183190"/>
    <lineage>
        <taxon>Bacteria</taxon>
        <taxon>Pseudomonadati</taxon>
        <taxon>Pseudomonadota</taxon>
        <taxon>Gammaproteobacteria</taxon>
        <taxon>Lysobacterales</taxon>
        <taxon>Lysobacteraceae</taxon>
        <taxon>Xylella</taxon>
    </lineage>
</organism>
<keyword id="KW-0012">Acyltransferase</keyword>
<keyword id="KW-0133">Cell shape</keyword>
<keyword id="KW-0961">Cell wall biogenesis/degradation</keyword>
<keyword id="KW-0963">Cytoplasm</keyword>
<keyword id="KW-0460">Magnesium</keyword>
<keyword id="KW-0479">Metal-binding</keyword>
<keyword id="KW-0511">Multifunctional enzyme</keyword>
<keyword id="KW-0548">Nucleotidyltransferase</keyword>
<keyword id="KW-0573">Peptidoglycan synthesis</keyword>
<keyword id="KW-1185">Reference proteome</keyword>
<keyword id="KW-0677">Repeat</keyword>
<keyword id="KW-0808">Transferase</keyword>
<accession>Q87E93</accession>
<comment type="function">
    <text evidence="1">Catalyzes the last two sequential reactions in the de novo biosynthetic pathway for UDP-N-acetylglucosamine (UDP-GlcNAc). The C-terminal domain catalyzes the transfer of acetyl group from acetyl coenzyme A to glucosamine-1-phosphate (GlcN-1-P) to produce N-acetylglucosamine-1-phosphate (GlcNAc-1-P), which is converted into UDP-GlcNAc by the transfer of uridine 5-monophosphate (from uridine 5-triphosphate), a reaction catalyzed by the N-terminal domain.</text>
</comment>
<comment type="catalytic activity">
    <reaction evidence="1">
        <text>alpha-D-glucosamine 1-phosphate + acetyl-CoA = N-acetyl-alpha-D-glucosamine 1-phosphate + CoA + H(+)</text>
        <dbReference type="Rhea" id="RHEA:13725"/>
        <dbReference type="ChEBI" id="CHEBI:15378"/>
        <dbReference type="ChEBI" id="CHEBI:57287"/>
        <dbReference type="ChEBI" id="CHEBI:57288"/>
        <dbReference type="ChEBI" id="CHEBI:57776"/>
        <dbReference type="ChEBI" id="CHEBI:58516"/>
        <dbReference type="EC" id="2.3.1.157"/>
    </reaction>
</comment>
<comment type="catalytic activity">
    <reaction evidence="1">
        <text>N-acetyl-alpha-D-glucosamine 1-phosphate + UTP + H(+) = UDP-N-acetyl-alpha-D-glucosamine + diphosphate</text>
        <dbReference type="Rhea" id="RHEA:13509"/>
        <dbReference type="ChEBI" id="CHEBI:15378"/>
        <dbReference type="ChEBI" id="CHEBI:33019"/>
        <dbReference type="ChEBI" id="CHEBI:46398"/>
        <dbReference type="ChEBI" id="CHEBI:57705"/>
        <dbReference type="ChEBI" id="CHEBI:57776"/>
        <dbReference type="EC" id="2.7.7.23"/>
    </reaction>
</comment>
<comment type="cofactor">
    <cofactor evidence="1">
        <name>Mg(2+)</name>
        <dbReference type="ChEBI" id="CHEBI:18420"/>
    </cofactor>
    <text evidence="1">Binds 1 Mg(2+) ion per subunit.</text>
</comment>
<comment type="pathway">
    <text evidence="1">Nucleotide-sugar biosynthesis; UDP-N-acetyl-alpha-D-glucosamine biosynthesis; N-acetyl-alpha-D-glucosamine 1-phosphate from alpha-D-glucosamine 6-phosphate (route II): step 2/2.</text>
</comment>
<comment type="pathway">
    <text evidence="1">Nucleotide-sugar biosynthesis; UDP-N-acetyl-alpha-D-glucosamine biosynthesis; UDP-N-acetyl-alpha-D-glucosamine from N-acetyl-alpha-D-glucosamine 1-phosphate: step 1/1.</text>
</comment>
<comment type="pathway">
    <text evidence="1">Bacterial outer membrane biogenesis; LPS lipid A biosynthesis.</text>
</comment>
<comment type="subunit">
    <text evidence="1">Homotrimer.</text>
</comment>
<comment type="subcellular location">
    <subcellularLocation>
        <location evidence="1">Cytoplasm</location>
    </subcellularLocation>
</comment>
<comment type="similarity">
    <text evidence="1">In the N-terminal section; belongs to the N-acetylglucosamine-1-phosphate uridyltransferase family.</text>
</comment>
<comment type="similarity">
    <text evidence="1">In the C-terminal section; belongs to the transferase hexapeptide repeat family.</text>
</comment>